<sequence>MPKVGIIYNDIKPVAGRVAIELKDKLTTAGWDVSITSSIGGILGYSNPESPVCHTPIDGLTPPGFDSEMKFAIVLGGDGTVLAASRQVAPCGIPILAINTGHMGFLTETYLNQLPQAIDQAIAGEYEIEERAMLTVKVLRGESVLWEALCLNEMVLHREPLTSMCHFEIAVGRHAPVDIAADGVIVSTPTGSTAYSLSAGGPVVTPGVPALQLVPICPHSLASRALVFPDTEPVNIYPVNIPRLVMVVDGNGGCYIFPEDRVYLERSPYSVKFIRLQPPEFFRILREKLGWGLPHIAKPTSVELP</sequence>
<gene>
    <name evidence="1" type="primary">nadK2</name>
    <name type="ordered locus">Ava_1921</name>
</gene>
<reference key="1">
    <citation type="journal article" date="2014" name="Stand. Genomic Sci.">
        <title>Complete genome sequence of Anabaena variabilis ATCC 29413.</title>
        <authorList>
            <person name="Thiel T."/>
            <person name="Pratte B.S."/>
            <person name="Zhong J."/>
            <person name="Goodwin L."/>
            <person name="Copeland A."/>
            <person name="Lucas S."/>
            <person name="Han C."/>
            <person name="Pitluck S."/>
            <person name="Land M.L."/>
            <person name="Kyrpides N.C."/>
            <person name="Woyke T."/>
        </authorList>
    </citation>
    <scope>NUCLEOTIDE SEQUENCE [LARGE SCALE GENOMIC DNA]</scope>
    <source>
        <strain>ATCC 29413 / PCC 7937</strain>
    </source>
</reference>
<protein>
    <recommendedName>
        <fullName evidence="1">NAD kinase 2</fullName>
        <ecNumber evidence="1">2.7.1.23</ecNumber>
    </recommendedName>
    <alternativeName>
        <fullName evidence="1">ATP-dependent NAD kinase 2</fullName>
    </alternativeName>
</protein>
<proteinExistence type="inferred from homology"/>
<name>NADK2_TRIV2</name>
<feature type="chain" id="PRO_0000229596" description="NAD kinase 2">
    <location>
        <begin position="1"/>
        <end position="305"/>
    </location>
</feature>
<feature type="active site" description="Proton acceptor" evidence="1">
    <location>
        <position position="78"/>
    </location>
</feature>
<feature type="binding site" evidence="1">
    <location>
        <begin position="78"/>
        <end position="79"/>
    </location>
    <ligand>
        <name>NAD(+)</name>
        <dbReference type="ChEBI" id="CHEBI:57540"/>
    </ligand>
</feature>
<feature type="binding site" evidence="1">
    <location>
        <begin position="152"/>
        <end position="153"/>
    </location>
    <ligand>
        <name>NAD(+)</name>
        <dbReference type="ChEBI" id="CHEBI:57540"/>
    </ligand>
</feature>
<feature type="binding site" evidence="1">
    <location>
        <position position="182"/>
    </location>
    <ligand>
        <name>NAD(+)</name>
        <dbReference type="ChEBI" id="CHEBI:57540"/>
    </ligand>
</feature>
<feature type="binding site" evidence="1">
    <location>
        <begin position="193"/>
        <end position="198"/>
    </location>
    <ligand>
        <name>NAD(+)</name>
        <dbReference type="ChEBI" id="CHEBI:57540"/>
    </ligand>
</feature>
<feature type="binding site" evidence="1">
    <location>
        <position position="251"/>
    </location>
    <ligand>
        <name>NAD(+)</name>
        <dbReference type="ChEBI" id="CHEBI:57540"/>
    </ligand>
</feature>
<accession>Q3MBU3</accession>
<organism>
    <name type="scientific">Trichormus variabilis (strain ATCC 29413 / PCC 7937)</name>
    <name type="common">Anabaena variabilis</name>
    <dbReference type="NCBI Taxonomy" id="240292"/>
    <lineage>
        <taxon>Bacteria</taxon>
        <taxon>Bacillati</taxon>
        <taxon>Cyanobacteriota</taxon>
        <taxon>Cyanophyceae</taxon>
        <taxon>Nostocales</taxon>
        <taxon>Nostocaceae</taxon>
        <taxon>Trichormus</taxon>
    </lineage>
</organism>
<dbReference type="EC" id="2.7.1.23" evidence="1"/>
<dbReference type="EMBL" id="CP000117">
    <property type="protein sequence ID" value="ABA21543.1"/>
    <property type="status" value="ALT_INIT"/>
    <property type="molecule type" value="Genomic_DNA"/>
</dbReference>
<dbReference type="SMR" id="Q3MBU3"/>
<dbReference type="STRING" id="240292.Ava_1921"/>
<dbReference type="KEGG" id="ava:Ava_1921"/>
<dbReference type="eggNOG" id="COG0061">
    <property type="taxonomic scope" value="Bacteria"/>
</dbReference>
<dbReference type="HOGENOM" id="CLU_008831_0_1_3"/>
<dbReference type="Proteomes" id="UP000002533">
    <property type="component" value="Chromosome"/>
</dbReference>
<dbReference type="GO" id="GO:0005737">
    <property type="term" value="C:cytoplasm"/>
    <property type="evidence" value="ECO:0007669"/>
    <property type="project" value="UniProtKB-SubCell"/>
</dbReference>
<dbReference type="GO" id="GO:0005524">
    <property type="term" value="F:ATP binding"/>
    <property type="evidence" value="ECO:0007669"/>
    <property type="project" value="UniProtKB-KW"/>
</dbReference>
<dbReference type="GO" id="GO:0046872">
    <property type="term" value="F:metal ion binding"/>
    <property type="evidence" value="ECO:0007669"/>
    <property type="project" value="UniProtKB-UniRule"/>
</dbReference>
<dbReference type="GO" id="GO:0051287">
    <property type="term" value="F:NAD binding"/>
    <property type="evidence" value="ECO:0007669"/>
    <property type="project" value="UniProtKB-ARBA"/>
</dbReference>
<dbReference type="GO" id="GO:0003951">
    <property type="term" value="F:NAD+ kinase activity"/>
    <property type="evidence" value="ECO:0007669"/>
    <property type="project" value="UniProtKB-UniRule"/>
</dbReference>
<dbReference type="GO" id="GO:0019674">
    <property type="term" value="P:NAD metabolic process"/>
    <property type="evidence" value="ECO:0007669"/>
    <property type="project" value="InterPro"/>
</dbReference>
<dbReference type="GO" id="GO:0006741">
    <property type="term" value="P:NADP biosynthetic process"/>
    <property type="evidence" value="ECO:0007669"/>
    <property type="project" value="UniProtKB-UniRule"/>
</dbReference>
<dbReference type="Gene3D" id="3.40.50.10330">
    <property type="entry name" value="Probable inorganic polyphosphate/atp-NAD kinase, domain 1"/>
    <property type="match status" value="1"/>
</dbReference>
<dbReference type="Gene3D" id="2.60.200.30">
    <property type="entry name" value="Probable inorganic polyphosphate/atp-NAD kinase, domain 2"/>
    <property type="match status" value="1"/>
</dbReference>
<dbReference type="HAMAP" id="MF_00361">
    <property type="entry name" value="NAD_kinase"/>
    <property type="match status" value="1"/>
</dbReference>
<dbReference type="InterPro" id="IPR017438">
    <property type="entry name" value="ATP-NAD_kinase_N"/>
</dbReference>
<dbReference type="InterPro" id="IPR017437">
    <property type="entry name" value="ATP-NAD_kinase_PpnK-typ_C"/>
</dbReference>
<dbReference type="InterPro" id="IPR016064">
    <property type="entry name" value="NAD/diacylglycerol_kinase_sf"/>
</dbReference>
<dbReference type="InterPro" id="IPR002504">
    <property type="entry name" value="NADK"/>
</dbReference>
<dbReference type="NCBIfam" id="NF002732">
    <property type="entry name" value="PRK02649.1"/>
    <property type="match status" value="1"/>
</dbReference>
<dbReference type="PANTHER" id="PTHR20275">
    <property type="entry name" value="NAD KINASE"/>
    <property type="match status" value="1"/>
</dbReference>
<dbReference type="PANTHER" id="PTHR20275:SF13">
    <property type="entry name" value="NAD KINASE 2"/>
    <property type="match status" value="1"/>
</dbReference>
<dbReference type="Pfam" id="PF01513">
    <property type="entry name" value="NAD_kinase"/>
    <property type="match status" value="1"/>
</dbReference>
<dbReference type="Pfam" id="PF20143">
    <property type="entry name" value="NAD_kinase_C"/>
    <property type="match status" value="1"/>
</dbReference>
<dbReference type="SUPFAM" id="SSF111331">
    <property type="entry name" value="NAD kinase/diacylglycerol kinase-like"/>
    <property type="match status" value="1"/>
</dbReference>
<keyword id="KW-0067">ATP-binding</keyword>
<keyword id="KW-0963">Cytoplasm</keyword>
<keyword id="KW-0418">Kinase</keyword>
<keyword id="KW-0520">NAD</keyword>
<keyword id="KW-0521">NADP</keyword>
<keyword id="KW-0547">Nucleotide-binding</keyword>
<keyword id="KW-0808">Transferase</keyword>
<comment type="function">
    <text evidence="1">Involved in the regulation of the intracellular balance of NAD and NADP, and is a key enzyme in the biosynthesis of NADP. Catalyzes specifically the phosphorylation on 2'-hydroxyl of the adenosine moiety of NAD to yield NADP.</text>
</comment>
<comment type="catalytic activity">
    <reaction evidence="1">
        <text>NAD(+) + ATP = ADP + NADP(+) + H(+)</text>
        <dbReference type="Rhea" id="RHEA:18629"/>
        <dbReference type="ChEBI" id="CHEBI:15378"/>
        <dbReference type="ChEBI" id="CHEBI:30616"/>
        <dbReference type="ChEBI" id="CHEBI:57540"/>
        <dbReference type="ChEBI" id="CHEBI:58349"/>
        <dbReference type="ChEBI" id="CHEBI:456216"/>
        <dbReference type="EC" id="2.7.1.23"/>
    </reaction>
</comment>
<comment type="cofactor">
    <cofactor evidence="1">
        <name>a divalent metal cation</name>
        <dbReference type="ChEBI" id="CHEBI:60240"/>
    </cofactor>
</comment>
<comment type="subcellular location">
    <subcellularLocation>
        <location evidence="1">Cytoplasm</location>
    </subcellularLocation>
</comment>
<comment type="similarity">
    <text evidence="1">Belongs to the NAD kinase family.</text>
</comment>
<comment type="sequence caution" evidence="2">
    <conflict type="erroneous initiation">
        <sequence resource="EMBL-CDS" id="ABA21543"/>
    </conflict>
    <text>Extended N-terminus.</text>
</comment>
<evidence type="ECO:0000255" key="1">
    <source>
        <dbReference type="HAMAP-Rule" id="MF_00361"/>
    </source>
</evidence>
<evidence type="ECO:0000305" key="2"/>